<feature type="chain" id="PRO_1000023374" description="Translational regulator CsrA">
    <location>
        <begin position="1"/>
        <end position="75"/>
    </location>
</feature>
<dbReference type="EMBL" id="CP000568">
    <property type="protein sequence ID" value="ABN53441.1"/>
    <property type="molecule type" value="Genomic_DNA"/>
</dbReference>
<dbReference type="RefSeq" id="WP_020457746.1">
    <property type="nucleotide sequence ID" value="NC_009012.1"/>
</dbReference>
<dbReference type="SMR" id="A3DHL2"/>
<dbReference type="STRING" id="203119.Cthe_2239"/>
<dbReference type="GeneID" id="35803940"/>
<dbReference type="KEGG" id="cth:Cthe_2239"/>
<dbReference type="eggNOG" id="COG1551">
    <property type="taxonomic scope" value="Bacteria"/>
</dbReference>
<dbReference type="HOGENOM" id="CLU_164837_0_2_9"/>
<dbReference type="OrthoDB" id="9809061at2"/>
<dbReference type="Proteomes" id="UP000002145">
    <property type="component" value="Chromosome"/>
</dbReference>
<dbReference type="GO" id="GO:0005829">
    <property type="term" value="C:cytosol"/>
    <property type="evidence" value="ECO:0007669"/>
    <property type="project" value="TreeGrafter"/>
</dbReference>
<dbReference type="GO" id="GO:0048027">
    <property type="term" value="F:mRNA 5'-UTR binding"/>
    <property type="evidence" value="ECO:0007669"/>
    <property type="project" value="UniProtKB-UniRule"/>
</dbReference>
<dbReference type="GO" id="GO:0044781">
    <property type="term" value="P:bacterial-type flagellum organization"/>
    <property type="evidence" value="ECO:0007669"/>
    <property type="project" value="UniProtKB-KW"/>
</dbReference>
<dbReference type="GO" id="GO:0006402">
    <property type="term" value="P:mRNA catabolic process"/>
    <property type="evidence" value="ECO:0007669"/>
    <property type="project" value="InterPro"/>
</dbReference>
<dbReference type="GO" id="GO:0045947">
    <property type="term" value="P:negative regulation of translational initiation"/>
    <property type="evidence" value="ECO:0007669"/>
    <property type="project" value="UniProtKB-UniRule"/>
</dbReference>
<dbReference type="GO" id="GO:1902208">
    <property type="term" value="P:regulation of bacterial-type flagellum assembly"/>
    <property type="evidence" value="ECO:0007669"/>
    <property type="project" value="UniProtKB-UniRule"/>
</dbReference>
<dbReference type="GO" id="GO:0006109">
    <property type="term" value="P:regulation of carbohydrate metabolic process"/>
    <property type="evidence" value="ECO:0007669"/>
    <property type="project" value="InterPro"/>
</dbReference>
<dbReference type="FunFam" id="2.60.40.4380:FF:000002">
    <property type="entry name" value="Translational regulator CsrA"/>
    <property type="match status" value="1"/>
</dbReference>
<dbReference type="Gene3D" id="2.60.40.4380">
    <property type="entry name" value="Translational regulator CsrA"/>
    <property type="match status" value="1"/>
</dbReference>
<dbReference type="HAMAP" id="MF_00167">
    <property type="entry name" value="CsrA"/>
    <property type="match status" value="1"/>
</dbReference>
<dbReference type="InterPro" id="IPR003751">
    <property type="entry name" value="CsrA"/>
</dbReference>
<dbReference type="InterPro" id="IPR036107">
    <property type="entry name" value="CsrA_sf"/>
</dbReference>
<dbReference type="NCBIfam" id="TIGR00202">
    <property type="entry name" value="csrA"/>
    <property type="match status" value="1"/>
</dbReference>
<dbReference type="NCBIfam" id="NF002469">
    <property type="entry name" value="PRK01712.1"/>
    <property type="match status" value="1"/>
</dbReference>
<dbReference type="PANTHER" id="PTHR34984">
    <property type="entry name" value="CARBON STORAGE REGULATOR"/>
    <property type="match status" value="1"/>
</dbReference>
<dbReference type="PANTHER" id="PTHR34984:SF1">
    <property type="entry name" value="CARBON STORAGE REGULATOR"/>
    <property type="match status" value="1"/>
</dbReference>
<dbReference type="Pfam" id="PF02599">
    <property type="entry name" value="CsrA"/>
    <property type="match status" value="1"/>
</dbReference>
<dbReference type="SUPFAM" id="SSF117130">
    <property type="entry name" value="CsrA-like"/>
    <property type="match status" value="1"/>
</dbReference>
<proteinExistence type="inferred from homology"/>
<protein>
    <recommendedName>
        <fullName evidence="1">Translational regulator CsrA</fullName>
    </recommendedName>
</protein>
<comment type="function">
    <text evidence="1">A translational regulator that binds mRNA to regulate translation initiation and/or mRNA stability. Usually binds in the 5'-UTR at or near the Shine-Dalgarno sequence preventing ribosome-binding, thus repressing translation. Its main target seems to be the major flagellin gene, while its function is anatagonized by FliW.</text>
</comment>
<comment type="subunit">
    <text evidence="1">Homodimer; the beta-strands of each monomer intercalate to form a hydrophobic core, while the alpha-helices form wings that extend away from the core.</text>
</comment>
<comment type="subcellular location">
    <subcellularLocation>
        <location evidence="1">Cytoplasm</location>
    </subcellularLocation>
</comment>
<comment type="similarity">
    <text evidence="1">Belongs to the CsrA/RsmA family.</text>
</comment>
<evidence type="ECO:0000255" key="1">
    <source>
        <dbReference type="HAMAP-Rule" id="MF_00167"/>
    </source>
</evidence>
<name>CSRA_ACET2</name>
<reference key="1">
    <citation type="submission" date="2007-02" db="EMBL/GenBank/DDBJ databases">
        <title>Complete sequence of Clostridium thermocellum ATCC 27405.</title>
        <authorList>
            <consortium name="US DOE Joint Genome Institute"/>
            <person name="Copeland A."/>
            <person name="Lucas S."/>
            <person name="Lapidus A."/>
            <person name="Barry K."/>
            <person name="Detter J.C."/>
            <person name="Glavina del Rio T."/>
            <person name="Hammon N."/>
            <person name="Israni S."/>
            <person name="Dalin E."/>
            <person name="Tice H."/>
            <person name="Pitluck S."/>
            <person name="Chertkov O."/>
            <person name="Brettin T."/>
            <person name="Bruce D."/>
            <person name="Han C."/>
            <person name="Tapia R."/>
            <person name="Gilna P."/>
            <person name="Schmutz J."/>
            <person name="Larimer F."/>
            <person name="Land M."/>
            <person name="Hauser L."/>
            <person name="Kyrpides N."/>
            <person name="Mikhailova N."/>
            <person name="Wu J.H.D."/>
            <person name="Newcomb M."/>
            <person name="Richardson P."/>
        </authorList>
    </citation>
    <scope>NUCLEOTIDE SEQUENCE [LARGE SCALE GENOMIC DNA]</scope>
    <source>
        <strain>ATCC 27405 / DSM 1237 / JCM 9322 / NBRC 103400 / NCIMB 10682 / NRRL B-4536 / VPI 7372</strain>
    </source>
</reference>
<accession>A3DHL2</accession>
<keyword id="KW-1005">Bacterial flagellum biogenesis</keyword>
<keyword id="KW-0963">Cytoplasm</keyword>
<keyword id="KW-1185">Reference proteome</keyword>
<keyword id="KW-0678">Repressor</keyword>
<keyword id="KW-0694">RNA-binding</keyword>
<keyword id="KW-0810">Translation regulation</keyword>
<gene>
    <name evidence="1" type="primary">csrA</name>
    <name type="ordered locus">Cthe_2239</name>
</gene>
<sequence>MLVLTRKKNESIIINDNIEITVVDIQGEQVRIGINAPKSISIYRKEIYLEIQAENKKAAEIKNVDLKEDLKDFLK</sequence>
<organism>
    <name type="scientific">Acetivibrio thermocellus (strain ATCC 27405 / DSM 1237 / JCM 9322 / NBRC 103400 / NCIMB 10682 / NRRL B-4536 / VPI 7372)</name>
    <name type="common">Clostridium thermocellum</name>
    <dbReference type="NCBI Taxonomy" id="203119"/>
    <lineage>
        <taxon>Bacteria</taxon>
        <taxon>Bacillati</taxon>
        <taxon>Bacillota</taxon>
        <taxon>Clostridia</taxon>
        <taxon>Eubacteriales</taxon>
        <taxon>Oscillospiraceae</taxon>
        <taxon>Acetivibrio</taxon>
    </lineage>
</organism>